<reference key="1">
    <citation type="journal article" date="2009" name="BMC Genomics">
        <title>Pseudogene accumulation in the evolutionary histories of Salmonella enterica serovars Paratyphi A and Typhi.</title>
        <authorList>
            <person name="Holt K.E."/>
            <person name="Thomson N.R."/>
            <person name="Wain J."/>
            <person name="Langridge G.C."/>
            <person name="Hasan R."/>
            <person name="Bhutta Z.A."/>
            <person name="Quail M.A."/>
            <person name="Norbertczak H."/>
            <person name="Walker D."/>
            <person name="Simmonds M."/>
            <person name="White B."/>
            <person name="Bason N."/>
            <person name="Mungall K."/>
            <person name="Dougan G."/>
            <person name="Parkhill J."/>
        </authorList>
    </citation>
    <scope>NUCLEOTIDE SEQUENCE [LARGE SCALE GENOMIC DNA]</scope>
    <source>
        <strain>AKU_12601</strain>
    </source>
</reference>
<organism>
    <name type="scientific">Salmonella paratyphi A (strain AKU_12601)</name>
    <dbReference type="NCBI Taxonomy" id="554290"/>
    <lineage>
        <taxon>Bacteria</taxon>
        <taxon>Pseudomonadati</taxon>
        <taxon>Pseudomonadota</taxon>
        <taxon>Gammaproteobacteria</taxon>
        <taxon>Enterobacterales</taxon>
        <taxon>Enterobacteriaceae</taxon>
        <taxon>Salmonella</taxon>
    </lineage>
</organism>
<sequence>MFCVQCEQTIRTPAGNGCSYAQGMCGKTAETSDLQDLLIAALQGLSAWAVKAREYGIINHDVDNFAPRAFFSTLTNVNFDSPRIVGYAREAIAMREALKAQCLSVDANAHCDNPMADLQLVSDDLGELQRQAAEFTPNKDKAAIGENILGLRLLCLYGLKGAAAYMEHAHVLGQYDNDIYAQYHKIMAWLGTWPADMNALLECAMEIGQMNFKVMSILDAGETTKYGHPTPTQVNVKATEGKCILISGHDLKDLYNLLEQTEGTGVNVYTHGEMLPAHGYPELRKFKHLVGNYGSGWQNQQVEFARFPGPIVMTSNCIIDPTVGSYDDRIWTRSIVGWPGVSHLEGDDFGPVIAQAQQMAGFPYSEIPHLITVGFGRQTLLGAADTLIDLVSREKLRHIFLVGGCDGARGERNYFTDFATSVPDDCLILTLACGKYRFNKLEFGDIEGLPRLVDAGQCNDAYSAIILAVTLAEKLGCGVNDLPLSLVLSWFEQKAIVILLTLLSLGVKNIVTGPTAPGFFTPDLLAILNEKFGLRSVTTVEEDMKQLLSA</sequence>
<name>HCP_SALPK</name>
<gene>
    <name evidence="1" type="primary">hcp</name>
    <name type="ordered locus">SSPA1732</name>
</gene>
<protein>
    <recommendedName>
        <fullName evidence="1">Hydroxylamine reductase</fullName>
        <ecNumber evidence="1">1.7.99.1</ecNumber>
    </recommendedName>
    <alternativeName>
        <fullName evidence="1">Hybrid-cluster protein</fullName>
        <shortName evidence="1">HCP</shortName>
    </alternativeName>
    <alternativeName>
        <fullName evidence="1">Prismane protein</fullName>
    </alternativeName>
</protein>
<proteinExistence type="inferred from homology"/>
<accession>B5BBT7</accession>
<dbReference type="EC" id="1.7.99.1" evidence="1"/>
<dbReference type="EMBL" id="FM200053">
    <property type="protein sequence ID" value="CAR59926.1"/>
    <property type="molecule type" value="Genomic_DNA"/>
</dbReference>
<dbReference type="RefSeq" id="WP_000458794.1">
    <property type="nucleotide sequence ID" value="NC_011147.1"/>
</dbReference>
<dbReference type="SMR" id="B5BBT7"/>
<dbReference type="KEGG" id="sek:SSPA1732"/>
<dbReference type="HOGENOM" id="CLU_038344_2_0_6"/>
<dbReference type="Proteomes" id="UP000001869">
    <property type="component" value="Chromosome"/>
</dbReference>
<dbReference type="GO" id="GO:0005737">
    <property type="term" value="C:cytoplasm"/>
    <property type="evidence" value="ECO:0007669"/>
    <property type="project" value="UniProtKB-SubCell"/>
</dbReference>
<dbReference type="GO" id="GO:0051537">
    <property type="term" value="F:2 iron, 2 sulfur cluster binding"/>
    <property type="evidence" value="ECO:0007669"/>
    <property type="project" value="UniProtKB-KW"/>
</dbReference>
<dbReference type="GO" id="GO:0050418">
    <property type="term" value="F:hydroxylamine reductase activity"/>
    <property type="evidence" value="ECO:0007669"/>
    <property type="project" value="UniProtKB-UniRule"/>
</dbReference>
<dbReference type="GO" id="GO:0046872">
    <property type="term" value="F:metal ion binding"/>
    <property type="evidence" value="ECO:0007669"/>
    <property type="project" value="UniProtKB-KW"/>
</dbReference>
<dbReference type="GO" id="GO:0004601">
    <property type="term" value="F:peroxidase activity"/>
    <property type="evidence" value="ECO:0007669"/>
    <property type="project" value="TreeGrafter"/>
</dbReference>
<dbReference type="GO" id="GO:0042542">
    <property type="term" value="P:response to hydrogen peroxide"/>
    <property type="evidence" value="ECO:0007669"/>
    <property type="project" value="TreeGrafter"/>
</dbReference>
<dbReference type="CDD" id="cd01914">
    <property type="entry name" value="HCP"/>
    <property type="match status" value="1"/>
</dbReference>
<dbReference type="FunFam" id="1.20.1270.20:FF:000001">
    <property type="entry name" value="Hydroxylamine reductase"/>
    <property type="match status" value="1"/>
</dbReference>
<dbReference type="FunFam" id="1.20.1270.20:FF:000002">
    <property type="entry name" value="Hydroxylamine reductase"/>
    <property type="match status" value="1"/>
</dbReference>
<dbReference type="FunFam" id="3.40.50.2030:FF:000001">
    <property type="entry name" value="Hydroxylamine reductase"/>
    <property type="match status" value="1"/>
</dbReference>
<dbReference type="FunFam" id="3.40.50.2030:FF:000002">
    <property type="entry name" value="Hydroxylamine reductase"/>
    <property type="match status" value="1"/>
</dbReference>
<dbReference type="Gene3D" id="1.20.1270.20">
    <property type="match status" value="2"/>
</dbReference>
<dbReference type="Gene3D" id="3.40.50.2030">
    <property type="match status" value="2"/>
</dbReference>
<dbReference type="HAMAP" id="MF_00069">
    <property type="entry name" value="Hydroxylam_reduct"/>
    <property type="match status" value="1"/>
</dbReference>
<dbReference type="InterPro" id="IPR004137">
    <property type="entry name" value="HCP/CODH"/>
</dbReference>
<dbReference type="InterPro" id="IPR010048">
    <property type="entry name" value="Hydroxylam_reduct"/>
</dbReference>
<dbReference type="InterPro" id="IPR016099">
    <property type="entry name" value="Prismane-like_a/b-sand"/>
</dbReference>
<dbReference type="InterPro" id="IPR011254">
    <property type="entry name" value="Prismane-like_sf"/>
</dbReference>
<dbReference type="InterPro" id="IPR016100">
    <property type="entry name" value="Prismane_a-bundle"/>
</dbReference>
<dbReference type="NCBIfam" id="TIGR01703">
    <property type="entry name" value="hybrid_clust"/>
    <property type="match status" value="1"/>
</dbReference>
<dbReference type="NCBIfam" id="NF003658">
    <property type="entry name" value="PRK05290.1"/>
    <property type="match status" value="1"/>
</dbReference>
<dbReference type="PANTHER" id="PTHR30109">
    <property type="entry name" value="HYDROXYLAMINE REDUCTASE"/>
    <property type="match status" value="1"/>
</dbReference>
<dbReference type="PANTHER" id="PTHR30109:SF0">
    <property type="entry name" value="HYDROXYLAMINE REDUCTASE"/>
    <property type="match status" value="1"/>
</dbReference>
<dbReference type="Pfam" id="PF03063">
    <property type="entry name" value="Prismane"/>
    <property type="match status" value="1"/>
</dbReference>
<dbReference type="PIRSF" id="PIRSF000076">
    <property type="entry name" value="HCP"/>
    <property type="match status" value="1"/>
</dbReference>
<dbReference type="SUPFAM" id="SSF56821">
    <property type="entry name" value="Prismane protein-like"/>
    <property type="match status" value="1"/>
</dbReference>
<comment type="function">
    <text evidence="1">Catalyzes the reduction of hydroxylamine to form NH(3) and H(2)O.</text>
</comment>
<comment type="catalytic activity">
    <reaction evidence="1">
        <text>A + NH4(+) + H2O = hydroxylamine + AH2 + H(+)</text>
        <dbReference type="Rhea" id="RHEA:22052"/>
        <dbReference type="ChEBI" id="CHEBI:13193"/>
        <dbReference type="ChEBI" id="CHEBI:15377"/>
        <dbReference type="ChEBI" id="CHEBI:15378"/>
        <dbReference type="ChEBI" id="CHEBI:15429"/>
        <dbReference type="ChEBI" id="CHEBI:17499"/>
        <dbReference type="ChEBI" id="CHEBI:28938"/>
        <dbReference type="EC" id="1.7.99.1"/>
    </reaction>
</comment>
<comment type="cofactor">
    <cofactor evidence="1">
        <name>[2Fe-2S] cluster</name>
        <dbReference type="ChEBI" id="CHEBI:190135"/>
    </cofactor>
    <text evidence="1">Binds 1 [2Fe-2S] cluster.</text>
</comment>
<comment type="cofactor">
    <cofactor evidence="1">
        <name>hybrid [4Fe-2O-2S] cluster</name>
        <dbReference type="ChEBI" id="CHEBI:60519"/>
    </cofactor>
    <text evidence="1">Binds 1 hybrid [4Fe-2O-2S] cluster.</text>
</comment>
<comment type="subcellular location">
    <subcellularLocation>
        <location evidence="1">Cytoplasm</location>
    </subcellularLocation>
</comment>
<comment type="similarity">
    <text evidence="1">Belongs to the HCP family.</text>
</comment>
<evidence type="ECO:0000255" key="1">
    <source>
        <dbReference type="HAMAP-Rule" id="MF_00069"/>
    </source>
</evidence>
<feature type="chain" id="PRO_1000092350" description="Hydroxylamine reductase">
    <location>
        <begin position="1"/>
        <end position="550"/>
    </location>
</feature>
<feature type="binding site" evidence="1">
    <location>
        <position position="3"/>
    </location>
    <ligand>
        <name>[2Fe-2S] cluster</name>
        <dbReference type="ChEBI" id="CHEBI:190135"/>
    </ligand>
</feature>
<feature type="binding site" evidence="1">
    <location>
        <position position="6"/>
    </location>
    <ligand>
        <name>[2Fe-2S] cluster</name>
        <dbReference type="ChEBI" id="CHEBI:190135"/>
    </ligand>
</feature>
<feature type="binding site" evidence="1">
    <location>
        <position position="18"/>
    </location>
    <ligand>
        <name>[2Fe-2S] cluster</name>
        <dbReference type="ChEBI" id="CHEBI:190135"/>
    </ligand>
</feature>
<feature type="binding site" evidence="1">
    <location>
        <position position="25"/>
    </location>
    <ligand>
        <name>[2Fe-2S] cluster</name>
        <dbReference type="ChEBI" id="CHEBI:190135"/>
    </ligand>
</feature>
<feature type="binding site" evidence="1">
    <location>
        <position position="249"/>
    </location>
    <ligand>
        <name>hybrid [4Fe-2O-2S] cluster</name>
        <dbReference type="ChEBI" id="CHEBI:60519"/>
    </ligand>
</feature>
<feature type="binding site" evidence="1">
    <location>
        <position position="273"/>
    </location>
    <ligand>
        <name>hybrid [4Fe-2O-2S] cluster</name>
        <dbReference type="ChEBI" id="CHEBI:60519"/>
    </ligand>
</feature>
<feature type="binding site" evidence="1">
    <location>
        <position position="317"/>
    </location>
    <ligand>
        <name>hybrid [4Fe-2O-2S] cluster</name>
        <dbReference type="ChEBI" id="CHEBI:60519"/>
    </ligand>
</feature>
<feature type="binding site" description="via persulfide group" evidence="1">
    <location>
        <position position="405"/>
    </location>
    <ligand>
        <name>hybrid [4Fe-2O-2S] cluster</name>
        <dbReference type="ChEBI" id="CHEBI:60519"/>
    </ligand>
</feature>
<feature type="binding site" evidence="1">
    <location>
        <position position="433"/>
    </location>
    <ligand>
        <name>hybrid [4Fe-2O-2S] cluster</name>
        <dbReference type="ChEBI" id="CHEBI:60519"/>
    </ligand>
</feature>
<feature type="binding site" evidence="1">
    <location>
        <position position="458"/>
    </location>
    <ligand>
        <name>hybrid [4Fe-2O-2S] cluster</name>
        <dbReference type="ChEBI" id="CHEBI:60519"/>
    </ligand>
</feature>
<feature type="binding site" evidence="1">
    <location>
        <position position="492"/>
    </location>
    <ligand>
        <name>hybrid [4Fe-2O-2S] cluster</name>
        <dbReference type="ChEBI" id="CHEBI:60519"/>
    </ligand>
</feature>
<feature type="binding site" evidence="1">
    <location>
        <position position="494"/>
    </location>
    <ligand>
        <name>hybrid [4Fe-2O-2S] cluster</name>
        <dbReference type="ChEBI" id="CHEBI:60519"/>
    </ligand>
</feature>
<feature type="modified residue" description="Cysteine persulfide" evidence="1">
    <location>
        <position position="405"/>
    </location>
</feature>
<keyword id="KW-0001">2Fe-2S</keyword>
<keyword id="KW-0963">Cytoplasm</keyword>
<keyword id="KW-0408">Iron</keyword>
<keyword id="KW-0411">Iron-sulfur</keyword>
<keyword id="KW-0479">Metal-binding</keyword>
<keyword id="KW-0560">Oxidoreductase</keyword>